<keyword id="KW-0046">Antibiotic resistance</keyword>
<keyword id="KW-0963">Cytoplasm</keyword>
<keyword id="KW-0460">Magnesium</keyword>
<keyword id="KW-0479">Metal-binding</keyword>
<keyword id="KW-0808">Transferase</keyword>
<dbReference type="EC" id="2.5.1.-" evidence="1"/>
<dbReference type="EMBL" id="CP000730">
    <property type="protein sequence ID" value="ABX30305.1"/>
    <property type="molecule type" value="Genomic_DNA"/>
</dbReference>
<dbReference type="RefSeq" id="WP_000920239.1">
    <property type="nucleotide sequence ID" value="NC_010079.1"/>
</dbReference>
<dbReference type="SMR" id="A8Z522"/>
<dbReference type="CARD" id="ARO:3004661">
    <property type="molecule name" value="Saur_FosB"/>
    <property type="mechanism identifier" value="ARO:0001004"/>
    <property type="mechanism name" value="antibiotic inactivation"/>
</dbReference>
<dbReference type="KEGG" id="sax:USA300HOU_2313"/>
<dbReference type="HOGENOM" id="CLU_121356_0_0_9"/>
<dbReference type="GO" id="GO:0005737">
    <property type="term" value="C:cytoplasm"/>
    <property type="evidence" value="ECO:0007669"/>
    <property type="project" value="UniProtKB-SubCell"/>
</dbReference>
<dbReference type="GO" id="GO:0000287">
    <property type="term" value="F:magnesium ion binding"/>
    <property type="evidence" value="ECO:0007669"/>
    <property type="project" value="UniProtKB-UniRule"/>
</dbReference>
<dbReference type="GO" id="GO:0016765">
    <property type="term" value="F:transferase activity, transferring alkyl or aryl (other than methyl) groups"/>
    <property type="evidence" value="ECO:0007669"/>
    <property type="project" value="UniProtKB-UniRule"/>
</dbReference>
<dbReference type="GO" id="GO:0046677">
    <property type="term" value="P:response to antibiotic"/>
    <property type="evidence" value="ECO:0007669"/>
    <property type="project" value="UniProtKB-UniRule"/>
</dbReference>
<dbReference type="Gene3D" id="3.10.180.10">
    <property type="entry name" value="2,3-Dihydroxybiphenyl 1,2-Dioxygenase, domain 1"/>
    <property type="match status" value="1"/>
</dbReference>
<dbReference type="HAMAP" id="MF_01512">
    <property type="entry name" value="FosB"/>
    <property type="match status" value="1"/>
</dbReference>
<dbReference type="InterPro" id="IPR051332">
    <property type="entry name" value="Fosfomycin_Res_Enzymes"/>
</dbReference>
<dbReference type="InterPro" id="IPR029068">
    <property type="entry name" value="Glyas_Bleomycin-R_OHBP_Dase"/>
</dbReference>
<dbReference type="InterPro" id="IPR004360">
    <property type="entry name" value="Glyas_Fos-R_dOase_dom"/>
</dbReference>
<dbReference type="InterPro" id="IPR022858">
    <property type="entry name" value="Metallothiol_Trafse_FosB"/>
</dbReference>
<dbReference type="InterPro" id="IPR037523">
    <property type="entry name" value="VOC"/>
</dbReference>
<dbReference type="NCBIfam" id="NF000493">
    <property type="entry name" value="Fos_BSH"/>
    <property type="match status" value="1"/>
</dbReference>
<dbReference type="NCBIfam" id="NF003152">
    <property type="entry name" value="PRK04101.1"/>
    <property type="match status" value="1"/>
</dbReference>
<dbReference type="PANTHER" id="PTHR36113:SF6">
    <property type="entry name" value="FOSFOMYCIN RESISTANCE PROTEIN FOSX"/>
    <property type="match status" value="1"/>
</dbReference>
<dbReference type="PANTHER" id="PTHR36113">
    <property type="entry name" value="LYASE, PUTATIVE-RELATED-RELATED"/>
    <property type="match status" value="1"/>
</dbReference>
<dbReference type="Pfam" id="PF00903">
    <property type="entry name" value="Glyoxalase"/>
    <property type="match status" value="1"/>
</dbReference>
<dbReference type="SUPFAM" id="SSF54593">
    <property type="entry name" value="Glyoxalase/Bleomycin resistance protein/Dihydroxybiphenyl dioxygenase"/>
    <property type="match status" value="1"/>
</dbReference>
<dbReference type="PROSITE" id="PS51819">
    <property type="entry name" value="VOC"/>
    <property type="match status" value="1"/>
</dbReference>
<reference key="1">
    <citation type="journal article" date="2007" name="BMC Microbiol.">
        <title>Subtle genetic changes enhance virulence of methicillin resistant and sensitive Staphylococcus aureus.</title>
        <authorList>
            <person name="Highlander S.K."/>
            <person name="Hulten K.G."/>
            <person name="Qin X."/>
            <person name="Jiang H."/>
            <person name="Yerrapragada S."/>
            <person name="Mason E.O. Jr."/>
            <person name="Shang Y."/>
            <person name="Williams T.M."/>
            <person name="Fortunov R.M."/>
            <person name="Liu Y."/>
            <person name="Igboeli O."/>
            <person name="Petrosino J."/>
            <person name="Tirumalai M."/>
            <person name="Uzman A."/>
            <person name="Fox G.E."/>
            <person name="Cardenas A.M."/>
            <person name="Muzny D.M."/>
            <person name="Hemphill L."/>
            <person name="Ding Y."/>
            <person name="Dugan S."/>
            <person name="Blyth P.R."/>
            <person name="Buhay C.J."/>
            <person name="Dinh H.H."/>
            <person name="Hawes A.C."/>
            <person name="Holder M."/>
            <person name="Kovar C.L."/>
            <person name="Lee S.L."/>
            <person name="Liu W."/>
            <person name="Nazareth L.V."/>
            <person name="Wang Q."/>
            <person name="Zhou J."/>
            <person name="Kaplan S.L."/>
            <person name="Weinstock G.M."/>
        </authorList>
    </citation>
    <scope>NUCLEOTIDE SEQUENCE [LARGE SCALE GENOMIC DNA]</scope>
    <source>
        <strain>USA300 / TCH1516</strain>
    </source>
</reference>
<feature type="chain" id="PRO_1000087529" description="Metallothiol transferase FosB">
    <location>
        <begin position="1"/>
        <end position="139"/>
    </location>
</feature>
<feature type="domain" description="VOC" evidence="2">
    <location>
        <begin position="4"/>
        <end position="119"/>
    </location>
</feature>
<feature type="active site" description="Proton donor/acceptor" evidence="2">
    <location>
        <position position="115"/>
    </location>
</feature>
<feature type="binding site" evidence="1">
    <location>
        <position position="7"/>
    </location>
    <ligand>
        <name>Mg(2+)</name>
        <dbReference type="ChEBI" id="CHEBI:18420"/>
    </ligand>
</feature>
<feature type="binding site" evidence="1">
    <location>
        <position position="66"/>
    </location>
    <ligand>
        <name>Mg(2+)</name>
        <dbReference type="ChEBI" id="CHEBI:18420"/>
    </ligand>
</feature>
<feature type="binding site" evidence="1">
    <location>
        <position position="115"/>
    </location>
    <ligand>
        <name>Mg(2+)</name>
        <dbReference type="ChEBI" id="CHEBI:18420"/>
    </ligand>
</feature>
<accession>A8Z522</accession>
<comment type="function">
    <text evidence="1">Metallothiol transferase which confers resistance to fosfomycin by catalyzing the addition of a thiol cofactor to fosfomycin. L-cysteine is probably the physiological thiol donor.</text>
</comment>
<comment type="cofactor">
    <cofactor evidence="1">
        <name>Mg(2+)</name>
        <dbReference type="ChEBI" id="CHEBI:18420"/>
    </cofactor>
</comment>
<comment type="subunit">
    <text evidence="1">Homodimer.</text>
</comment>
<comment type="subcellular location">
    <subcellularLocation>
        <location evidence="1">Cytoplasm</location>
    </subcellularLocation>
</comment>
<comment type="similarity">
    <text evidence="1">Belongs to the fosfomycin resistance protein family. FosB subfamily.</text>
</comment>
<name>FOSB_STAAT</name>
<proteinExistence type="inferred from homology"/>
<protein>
    <recommendedName>
        <fullName evidence="1">Metallothiol transferase FosB</fullName>
        <ecNumber evidence="1">2.5.1.-</ecNumber>
    </recommendedName>
    <alternativeName>
        <fullName evidence="1">Fosfomycin resistance protein</fullName>
    </alternativeName>
</protein>
<evidence type="ECO:0000255" key="1">
    <source>
        <dbReference type="HAMAP-Rule" id="MF_01512"/>
    </source>
</evidence>
<evidence type="ECO:0000255" key="2">
    <source>
        <dbReference type="PROSITE-ProRule" id="PRU01163"/>
    </source>
</evidence>
<organism>
    <name type="scientific">Staphylococcus aureus (strain USA300 / TCH1516)</name>
    <dbReference type="NCBI Taxonomy" id="451516"/>
    <lineage>
        <taxon>Bacteria</taxon>
        <taxon>Bacillati</taxon>
        <taxon>Bacillota</taxon>
        <taxon>Bacilli</taxon>
        <taxon>Bacillales</taxon>
        <taxon>Staphylococcaceae</taxon>
        <taxon>Staphylococcus</taxon>
    </lineage>
</organism>
<sequence length="139" mass="16648">MLKSINHICFSVRNLNDSIHFYRDILLGKLLLTGKKTAYFELAGLWIALNEEKDIPRNEIHFSYTHIAFTIDDSEFKYWHQRLKDNNVNILEGRVRDIRDRQSIYFTDPDGHKLELHTGTLENRLNYYKEAKPHMTFYK</sequence>
<gene>
    <name evidence="1" type="primary">fosB</name>
    <name type="ordered locus">USA300HOU_2313</name>
</gene>